<reference key="1">
    <citation type="journal article" date="2000" name="Nature">
        <title>Genome sequence of the endocellular bacterial symbiont of aphids Buchnera sp. APS.</title>
        <authorList>
            <person name="Shigenobu S."/>
            <person name="Watanabe H."/>
            <person name="Hattori M."/>
            <person name="Sakaki Y."/>
            <person name="Ishikawa H."/>
        </authorList>
    </citation>
    <scope>NUCLEOTIDE SEQUENCE [LARGE SCALE GENOMIC DNA]</scope>
    <source>
        <strain>APS</strain>
    </source>
</reference>
<protein>
    <recommendedName>
        <fullName evidence="1">Small ribosomal subunit protein uS4</fullName>
    </recommendedName>
    <alternativeName>
        <fullName evidence="2">30S ribosomal protein S4</fullName>
    </alternativeName>
</protein>
<gene>
    <name evidence="1" type="primary">rpsD</name>
    <name type="ordered locus">BU500</name>
</gene>
<keyword id="KW-1185">Reference proteome</keyword>
<keyword id="KW-0687">Ribonucleoprotein</keyword>
<keyword id="KW-0689">Ribosomal protein</keyword>
<keyword id="KW-0694">RNA-binding</keyword>
<keyword id="KW-0699">rRNA-binding</keyword>
<sequence length="206" mass="23847">MAKYLGPKLKLSRREGTDLFLKSGLRSIESKCKLEQPPGQHGIRKPRLSDYAIQLREKQKVRRLYGVLERQFKIYYKLAASLKGNTGANLLQLLESRLDNVVYRMGFGCTRSESRQLINHKSIMVNNKVVNIASYQVSPNDQISIRNKSKNQSRIKAALELVEQREKPIWLEVNSTKMEGIFKRFPERSDLSAEINEYLIVELYSK</sequence>
<name>RS4_BUCAI</name>
<accession>P57567</accession>
<comment type="function">
    <text evidence="1">One of the primary rRNA binding proteins, it binds directly to 16S rRNA where it nucleates assembly of the body of the 30S subunit.</text>
</comment>
<comment type="function">
    <text evidence="1">With S5 and S12 plays an important role in translational accuracy.</text>
</comment>
<comment type="subunit">
    <text evidence="1">Part of the 30S ribosomal subunit. Contacts protein S5. The interaction surface between S4 and S5 is involved in control of translational fidelity.</text>
</comment>
<comment type="similarity">
    <text evidence="1">Belongs to the universal ribosomal protein uS4 family.</text>
</comment>
<dbReference type="EMBL" id="BA000003">
    <property type="protein sequence ID" value="BAB13193.1"/>
    <property type="molecule type" value="Genomic_DNA"/>
</dbReference>
<dbReference type="RefSeq" id="NP_240307.1">
    <property type="nucleotide sequence ID" value="NC_002528.1"/>
</dbReference>
<dbReference type="RefSeq" id="WP_009874451.1">
    <property type="nucleotide sequence ID" value="NZ_AP036055.1"/>
</dbReference>
<dbReference type="SMR" id="P57567"/>
<dbReference type="STRING" id="563178.BUAP5A_493"/>
<dbReference type="EnsemblBacteria" id="BAB13193">
    <property type="protein sequence ID" value="BAB13193"/>
    <property type="gene ID" value="BAB13193"/>
</dbReference>
<dbReference type="KEGG" id="buc:BU500"/>
<dbReference type="PATRIC" id="fig|107806.10.peg.505"/>
<dbReference type="eggNOG" id="COG0522">
    <property type="taxonomic scope" value="Bacteria"/>
</dbReference>
<dbReference type="HOGENOM" id="CLU_092403_0_2_6"/>
<dbReference type="Proteomes" id="UP000001806">
    <property type="component" value="Chromosome"/>
</dbReference>
<dbReference type="GO" id="GO:0015935">
    <property type="term" value="C:small ribosomal subunit"/>
    <property type="evidence" value="ECO:0007669"/>
    <property type="project" value="InterPro"/>
</dbReference>
<dbReference type="GO" id="GO:0019843">
    <property type="term" value="F:rRNA binding"/>
    <property type="evidence" value="ECO:0007669"/>
    <property type="project" value="UniProtKB-UniRule"/>
</dbReference>
<dbReference type="GO" id="GO:0003735">
    <property type="term" value="F:structural constituent of ribosome"/>
    <property type="evidence" value="ECO:0007669"/>
    <property type="project" value="InterPro"/>
</dbReference>
<dbReference type="GO" id="GO:0042274">
    <property type="term" value="P:ribosomal small subunit biogenesis"/>
    <property type="evidence" value="ECO:0007669"/>
    <property type="project" value="TreeGrafter"/>
</dbReference>
<dbReference type="GO" id="GO:0006412">
    <property type="term" value="P:translation"/>
    <property type="evidence" value="ECO:0007669"/>
    <property type="project" value="UniProtKB-UniRule"/>
</dbReference>
<dbReference type="CDD" id="cd00165">
    <property type="entry name" value="S4"/>
    <property type="match status" value="1"/>
</dbReference>
<dbReference type="FunFam" id="1.10.1050.10:FF:000001">
    <property type="entry name" value="30S ribosomal protein S4"/>
    <property type="match status" value="1"/>
</dbReference>
<dbReference type="FunFam" id="3.10.290.10:FF:000001">
    <property type="entry name" value="30S ribosomal protein S4"/>
    <property type="match status" value="1"/>
</dbReference>
<dbReference type="Gene3D" id="1.10.1050.10">
    <property type="entry name" value="Ribosomal Protein S4 Delta 41, Chain A, domain 1"/>
    <property type="match status" value="1"/>
</dbReference>
<dbReference type="Gene3D" id="3.10.290.10">
    <property type="entry name" value="RNA-binding S4 domain"/>
    <property type="match status" value="1"/>
</dbReference>
<dbReference type="HAMAP" id="MF_01306_B">
    <property type="entry name" value="Ribosomal_uS4_B"/>
    <property type="match status" value="1"/>
</dbReference>
<dbReference type="InterPro" id="IPR022801">
    <property type="entry name" value="Ribosomal_uS4"/>
</dbReference>
<dbReference type="InterPro" id="IPR005709">
    <property type="entry name" value="Ribosomal_uS4_bac-type"/>
</dbReference>
<dbReference type="InterPro" id="IPR018079">
    <property type="entry name" value="Ribosomal_uS4_CS"/>
</dbReference>
<dbReference type="InterPro" id="IPR001912">
    <property type="entry name" value="Ribosomal_uS4_N"/>
</dbReference>
<dbReference type="InterPro" id="IPR002942">
    <property type="entry name" value="S4_RNA-bd"/>
</dbReference>
<dbReference type="InterPro" id="IPR036986">
    <property type="entry name" value="S4_RNA-bd_sf"/>
</dbReference>
<dbReference type="NCBIfam" id="NF003717">
    <property type="entry name" value="PRK05327.1"/>
    <property type="match status" value="1"/>
</dbReference>
<dbReference type="NCBIfam" id="TIGR01017">
    <property type="entry name" value="rpsD_bact"/>
    <property type="match status" value="1"/>
</dbReference>
<dbReference type="PANTHER" id="PTHR11831">
    <property type="entry name" value="30S 40S RIBOSOMAL PROTEIN"/>
    <property type="match status" value="1"/>
</dbReference>
<dbReference type="PANTHER" id="PTHR11831:SF4">
    <property type="entry name" value="SMALL RIBOSOMAL SUBUNIT PROTEIN US4M"/>
    <property type="match status" value="1"/>
</dbReference>
<dbReference type="Pfam" id="PF00163">
    <property type="entry name" value="Ribosomal_S4"/>
    <property type="match status" value="1"/>
</dbReference>
<dbReference type="Pfam" id="PF01479">
    <property type="entry name" value="S4"/>
    <property type="match status" value="1"/>
</dbReference>
<dbReference type="SMART" id="SM01390">
    <property type="entry name" value="Ribosomal_S4"/>
    <property type="match status" value="1"/>
</dbReference>
<dbReference type="SMART" id="SM00363">
    <property type="entry name" value="S4"/>
    <property type="match status" value="1"/>
</dbReference>
<dbReference type="SUPFAM" id="SSF55174">
    <property type="entry name" value="Alpha-L RNA-binding motif"/>
    <property type="match status" value="1"/>
</dbReference>
<dbReference type="PROSITE" id="PS00632">
    <property type="entry name" value="RIBOSOMAL_S4"/>
    <property type="match status" value="1"/>
</dbReference>
<dbReference type="PROSITE" id="PS50889">
    <property type="entry name" value="S4"/>
    <property type="match status" value="1"/>
</dbReference>
<proteinExistence type="inferred from homology"/>
<evidence type="ECO:0000255" key="1">
    <source>
        <dbReference type="HAMAP-Rule" id="MF_01306"/>
    </source>
</evidence>
<evidence type="ECO:0000305" key="2"/>
<organism>
    <name type="scientific">Buchnera aphidicola subsp. Acyrthosiphon pisum (strain APS)</name>
    <name type="common">Acyrthosiphon pisum symbiotic bacterium</name>
    <dbReference type="NCBI Taxonomy" id="107806"/>
    <lineage>
        <taxon>Bacteria</taxon>
        <taxon>Pseudomonadati</taxon>
        <taxon>Pseudomonadota</taxon>
        <taxon>Gammaproteobacteria</taxon>
        <taxon>Enterobacterales</taxon>
        <taxon>Erwiniaceae</taxon>
        <taxon>Buchnera</taxon>
    </lineage>
</organism>
<feature type="chain" id="PRO_0000132353" description="Small ribosomal subunit protein uS4">
    <location>
        <begin position="1"/>
        <end position="206"/>
    </location>
</feature>
<feature type="domain" description="S4 RNA-binding" evidence="1">
    <location>
        <begin position="96"/>
        <end position="156"/>
    </location>
</feature>